<evidence type="ECO:0000250" key="1">
    <source>
        <dbReference type="UniProtKB" id="Q8BH57"/>
    </source>
</evidence>
<evidence type="ECO:0000255" key="2"/>
<evidence type="ECO:0000256" key="3">
    <source>
        <dbReference type="SAM" id="MobiDB-lite"/>
    </source>
</evidence>
<evidence type="ECO:0000269" key="4">
    <source>
    </source>
</evidence>
<evidence type="ECO:0000269" key="5">
    <source>
    </source>
</evidence>
<evidence type="ECO:0000269" key="6">
    <source>
    </source>
</evidence>
<evidence type="ECO:0000269" key="7">
    <source>
    </source>
</evidence>
<evidence type="ECO:0000269" key="8">
    <source>
    </source>
</evidence>
<evidence type="ECO:0000269" key="9">
    <source>
    </source>
</evidence>
<evidence type="ECO:0000269" key="10">
    <source>
    </source>
</evidence>
<evidence type="ECO:0000269" key="11">
    <source>
    </source>
</evidence>
<evidence type="ECO:0000269" key="12">
    <source>
    </source>
</evidence>
<evidence type="ECO:0000269" key="13">
    <source>
    </source>
</evidence>
<evidence type="ECO:0000269" key="14">
    <source>
    </source>
</evidence>
<evidence type="ECO:0000269" key="15">
    <source>
    </source>
</evidence>
<evidence type="ECO:0000269" key="16">
    <source>
    </source>
</evidence>
<evidence type="ECO:0000269" key="17">
    <source>
    </source>
</evidence>
<evidence type="ECO:0000269" key="18">
    <source>
    </source>
</evidence>
<evidence type="ECO:0000269" key="19">
    <source>
    </source>
</evidence>
<evidence type="ECO:0000269" key="20">
    <source>
    </source>
</evidence>
<evidence type="ECO:0000269" key="21">
    <source>
    </source>
</evidence>
<evidence type="ECO:0000269" key="22">
    <source>
    </source>
</evidence>
<evidence type="ECO:0000303" key="23">
    <source>
    </source>
</evidence>
<evidence type="ECO:0000303" key="24">
    <source>
    </source>
</evidence>
<evidence type="ECO:0000303" key="25">
    <source>
    </source>
</evidence>
<evidence type="ECO:0000303" key="26">
    <source>
    </source>
</evidence>
<evidence type="ECO:0000303" key="27">
    <source>
    </source>
</evidence>
<evidence type="ECO:0000303" key="28">
    <source>
    </source>
</evidence>
<evidence type="ECO:0000305" key="29"/>
<evidence type="ECO:0000312" key="30">
    <source>
        <dbReference type="HGNC" id="HGNC:30914"/>
    </source>
</evidence>
<evidence type="ECO:0000312" key="31">
    <source>
        <dbReference type="Proteomes" id="UP000005640"/>
    </source>
</evidence>
<evidence type="ECO:0007744" key="32">
    <source>
        <dbReference type="PDB" id="5CVL"/>
    </source>
</evidence>
<evidence type="ECO:0007744" key="33">
    <source>
        <dbReference type="PDB" id="5CVN"/>
    </source>
</evidence>
<evidence type="ECO:0007744" key="34">
    <source>
        <dbReference type="PDB" id="5CVO"/>
    </source>
</evidence>
<evidence type="ECO:0007744" key="35">
    <source>
        <dbReference type="PDB" id="5K1A"/>
    </source>
</evidence>
<evidence type="ECO:0007744" key="36">
    <source>
        <dbReference type="PDB" id="5K1B"/>
    </source>
</evidence>
<evidence type="ECO:0007744" key="37">
    <source>
        <dbReference type="PDB" id="5K1C"/>
    </source>
</evidence>
<evidence type="ECO:0007744" key="38">
    <source>
        <dbReference type="PDB" id="5L8E"/>
    </source>
</evidence>
<evidence type="ECO:0007744" key="39">
    <source>
        <dbReference type="PDB" id="5L8W"/>
    </source>
</evidence>
<evidence type="ECO:0007744" key="40">
    <source>
    </source>
</evidence>
<evidence type="ECO:0007744" key="41">
    <source>
    </source>
</evidence>
<evidence type="ECO:0007829" key="42">
    <source>
        <dbReference type="PDB" id="5CVL"/>
    </source>
</evidence>
<evidence type="ECO:0007829" key="43">
    <source>
        <dbReference type="PDB" id="5K1A"/>
    </source>
</evidence>
<evidence type="ECO:0007829" key="44">
    <source>
        <dbReference type="PDB" id="5L8E"/>
    </source>
</evidence>
<evidence type="ECO:0007829" key="45">
    <source>
        <dbReference type="PDB" id="6JLQ"/>
    </source>
</evidence>
<evidence type="ECO:0007829" key="46">
    <source>
        <dbReference type="PDB" id="8A9J"/>
    </source>
</evidence>
<proteinExistence type="evidence at protein level"/>
<feature type="chain" id="PRO_0000051399" description="WD repeat-containing protein 48">
    <location>
        <begin position="1"/>
        <end position="677"/>
    </location>
</feature>
<feature type="repeat" description="WD 1" evidence="2">
    <location>
        <begin position="28"/>
        <end position="67"/>
    </location>
</feature>
<feature type="repeat" description="WD 2" evidence="2">
    <location>
        <begin position="73"/>
        <end position="112"/>
    </location>
</feature>
<feature type="repeat" description="WD 3" evidence="2">
    <location>
        <begin position="115"/>
        <end position="154"/>
    </location>
</feature>
<feature type="repeat" description="WD 4" evidence="2">
    <location>
        <begin position="166"/>
        <end position="205"/>
    </location>
</feature>
<feature type="repeat" description="WD 5" evidence="2">
    <location>
        <begin position="208"/>
        <end position="247"/>
    </location>
</feature>
<feature type="repeat" description="WD 6" evidence="2">
    <location>
        <begin position="250"/>
        <end position="289"/>
    </location>
</feature>
<feature type="repeat" description="WD 7" evidence="2">
    <location>
        <begin position="292"/>
        <end position="334"/>
    </location>
</feature>
<feature type="repeat" description="WD 8" evidence="2">
    <location>
        <begin position="358"/>
        <end position="397"/>
    </location>
</feature>
<feature type="region of interest" description="Disordered" evidence="3">
    <location>
        <begin position="607"/>
        <end position="628"/>
    </location>
</feature>
<feature type="compositionally biased region" description="Low complexity" evidence="3">
    <location>
        <begin position="609"/>
        <end position="620"/>
    </location>
</feature>
<feature type="modified residue" description="Phosphotyrosine" evidence="1">
    <location>
        <position position="28"/>
    </location>
</feature>
<feature type="modified residue" description="N6-acetyllysine" evidence="40">
    <location>
        <position position="214"/>
    </location>
</feature>
<feature type="modified residue" description="N6-acetyllysine" evidence="1">
    <location>
        <position position="578"/>
    </location>
</feature>
<feature type="modified residue" description="Phosphothreonine" evidence="41">
    <location>
        <position position="613"/>
    </location>
</feature>
<feature type="splice variant" id="VSP_016776" description="In isoform 2." evidence="26">
    <location>
        <begin position="1"/>
        <end position="558"/>
    </location>
</feature>
<feature type="splice variant" id="VSP_037623" description="In isoform 4." evidence="25">
    <original>MAAHHRQNTAGRRKVQVSYVIRDEVEKYNRNGVNALQLDPALNRLFTAGRDSIIRIWSVNQHKQDPYIASMEHHTDWVNDIVLCCNGKTL</original>
    <variation>MECQSAQV</variation>
    <location>
        <begin position="1"/>
        <end position="90"/>
    </location>
</feature>
<feature type="splice variant" id="VSP_037624" description="In isoform 5." evidence="25">
    <location>
        <begin position="16"/>
        <end position="223"/>
    </location>
</feature>
<feature type="splice variant" id="VSP_037625" description="In isoform 3." evidence="25">
    <location>
        <begin position="91"/>
        <end position="99"/>
    </location>
</feature>
<feature type="splice variant" id="VSP_037626" description="In isoform 5." evidence="25">
    <location>
        <begin position="325"/>
        <end position="391"/>
    </location>
</feature>
<feature type="splice variant" id="VSP_016777" description="In isoform 2." evidence="26">
    <original>D</original>
    <variation>DQV</variation>
    <location>
        <position position="645"/>
    </location>
</feature>
<feature type="sequence variant" id="VAR_077846" description="Found in a patient with spastic paraplegia; uncertain significance." evidence="12">
    <location>
        <position position="628"/>
    </location>
</feature>
<feature type="mutagenesis site" description="In UAF1(3A); impaired DNA-binding; when associated with A-50 and A-168. In UAF1(3A); does not affect ability to promote USP1-mediated deubiquitination of FANCD2 and stimulate RAD51-mediated homologous recombination, because of DNA-binding mediated by RAD51AP1; when associated with A-50 and A-168. In UAF1(11A); impaired DNA-binding; when associated with A-50, A-117, A-161, A-168, A-230, A-272, A-274, A-275, A-318 and A-363. In UAF1(11A); does not affect ability to promote USP1-mediated deubiquitination of FANCD2 and stimulate RAD51-mediated homologous recombination, because of DNA-binding mediated by RAD51AP1; when associated with A-50, A-117, A-161, A-168, A-230, A-272, A-274, A-275, A-318 and A-363." evidence="18">
    <original>R</original>
    <variation>A</variation>
    <location>
        <position position="30"/>
    </location>
</feature>
<feature type="mutagenesis site" description="In UAF1(3A); impaired DNA-binding; when associated with A-30 and A-168. In UAF1(3A); does not affect ability to promote USP1-mediated deubiquitination of FANCD2 and stimulate RAD51-mediated homologous recombination, because of DNA-binding mediated by RAD51AP1; when associated with A-30 and A-168. In UAF1(11A); impaired DNA-binding; when associated with A-30, A-117, A-161, A-168, A-230, A-272, A-274, A-275, A-318 and A-363. In UAF1(11A); does not affect ability to promote USP1-mediated deubiquitination of FANCD2 and stimulate RAD51-mediated homologous recombination, because of DNA-binding mediated by RAD51AP1; when associated with A-30, A-117, A-161, A-168, A-230, A-272, A-274, A-275, A-318 and A-363." evidence="18">
    <original>R</original>
    <variation>A</variation>
    <location>
        <position position="50"/>
    </location>
</feature>
<feature type="mutagenesis site" description="Impaired binding to USP12; when associated with Ala-256." evidence="15">
    <original>W</original>
    <variation>A</variation>
    <location>
        <position position="77"/>
    </location>
</feature>
<feature type="mutagenesis site" description="In UAF1(11A); impaired DNA-binding; when associated with A-30, A-50, A-161, A-168, A-230, A-272, A-274, A-275, A-318 and A-363. In UAF1(11A); does not affect ability to promote USP1-mediated deubiquitination of FANCD2 and stimulate RAD51-mediated homologous recombination, because of DNA-binding mediated by RAD51AP1; when associated with A-30, A-50, A-161, A-168, A-230, A-272, A-274, A-275, A-318 and A-363." evidence="18">
    <original>K</original>
    <variation>A</variation>
    <location>
        <position position="117"/>
    </location>
</feature>
<feature type="mutagenesis site" description="Impaired binding to USP12; when associated with Ala-172." evidence="15">
    <original>Y</original>
    <variation>A</variation>
    <location>
        <position position="119"/>
    </location>
</feature>
<feature type="mutagenesis site" description="In UAF1(11A); impaired DNA-binding; when associated with A-30, A-50, A-117, A-168, A-230, A-272, A-274, A-275, A-318 and A-363. In UAF1(11A); does not affect ability to promote USP1-mediated deubiquitination of FANCD2 and stimulate RAD51-mediated homologous recombination, because of DNA-binding mediated by RAD51AP1; when associated with A-30, A-50, A-117, A-168, A-230, A-272, A-274, A-275, A-318 and A-363." evidence="18">
    <original>T</original>
    <variation>A</variation>
    <location>
        <position position="161"/>
    </location>
</feature>
<feature type="mutagenesis site" description="In UAF1(3A); impaired DNA-binding; when associated with A-30 and A-50. In UAF1(3A); does not affect ability to promote USP1-mediated deubiquitination of FANCD2 and stimulate RAD51-mediated homologous recombination, because of DNA-binding mediated by RAD51AP1; when associated with A-30 and A-50. In UAF1(11A); impaired DNA-binding; when associated with A-30, A-50, A-117, A-161, A-230, A-272, A-274, A-275, A-318 and A-363. In UAF1(11A); does not affect ability to promote USP1-mediated deubiquitination of FANCD2 and stimulate RAD51-mediated homologous recombination, because of DNA-binding mediated by RAD51AP1; when associated with A-30, A-50, A-117, A-161, A-230, A-272, A-274, A-275, A-318 and A-363." evidence="18">
    <original>K</original>
    <variation>A</variation>
    <location>
        <position position="168"/>
    </location>
</feature>
<feature type="mutagenesis site" description="Strongly reduces interaction with USP46 and abolishes stimulation of USP46 enzyme activity." evidence="13">
    <original>S</original>
    <variation>Y</variation>
    <location>
        <position position="170"/>
    </location>
</feature>
<feature type="mutagenesis site" description="Impaired binding to USP12; when associated with Ala-119." evidence="15">
    <original>Y</original>
    <variation>A</variation>
    <location>
        <position position="172"/>
    </location>
</feature>
<feature type="mutagenesis site" description="Strongly reduces interaction with USP12 or USP46 and abolishes stimulation of their enzyme activity; when associated with A-256 and D-272." evidence="13 17">
    <original>K</original>
    <variation>E</variation>
    <location>
        <position position="214"/>
    </location>
</feature>
<feature type="mutagenesis site" description="In UAF1(11A); impaired DNA-binding; when associated with A-30, A-50, A-117, A-161, A-168, A-272, A-274, A-275, A-318 and A-363. In UAF1(11A); does not affect ability to promote USP1-mediated deubiquitination of FANCD2 and stimulate RAD51-mediated homologous recombination, because of DNA-binding mediated by RAD51AP1; when associated with A-30, A-50, A-117, A-161, A-168, A-272, A-274, A-275, A-318 and A-363." evidence="18">
    <original>S</original>
    <variation>A</variation>
    <location>
        <position position="230"/>
    </location>
</feature>
<feature type="mutagenesis site" description="Strongly reduces interaction with USP12 or USP46 and abolishes stimulation of their enzyme activity; when associated with E-214 and D-272. Impaired binding to USP12; when associated with Ala-77." evidence="13 15 17">
    <original>W</original>
    <variation>A</variation>
    <location>
        <position position="256"/>
    </location>
</feature>
<feature type="mutagenesis site" description="In UAF1(11A); impaired DNA-binding; when associated with A-30, A-50, A-117, A-161, A-168, A-230, A-274, A-275, A-318 and A-363. In UAF1(11A); does not affect ability to promote USP1-mediated deubiquitination of FANCD2 and stimulate RAD51-mediated homologous recombination, because of DNA-binding mediated by RAD51AP1; when associated with A-30, A-50, A-117, A-161, A-168, A-230, A-274, A-275, A-318 and A-363." evidence="18">
    <original>R</original>
    <variation>A</variation>
    <location>
        <position position="272"/>
    </location>
</feature>
<feature type="mutagenesis site" description="Strongly reduces interaction with USP12 or USP46 and abolishes stimulation of their enzyme activity; when associated with E-214 and A-256." evidence="13 17">
    <original>R</original>
    <variation>D</variation>
    <location>
        <position position="272"/>
    </location>
</feature>
<feature type="mutagenesis site" description="In UAF1(11A); impaired DNA-binding; when associated with A-30, A-50, A-117, A-161, A-168, A-230, A-272, A-275, A-318 and A-363. In UAF1(11A); does not affect ability to promote USP1-mediated deubiquitination of FANCD2 and stimulate RAD51-mediated homologous recombination, because of DNA-binding mediated by RAD51AP1; when associated with A-30, A-50, A-117, A-161, A-168, A-230, A-272, A-275, A-318 and A-363." evidence="18">
    <original>R</original>
    <variation>A</variation>
    <location>
        <position position="274"/>
    </location>
</feature>
<feature type="mutagenesis site" description="In UAF1(11A); impaired DNA-binding; when associated with A-30, A-50, A-117, A-161, A-168, A-230, A-272, A-274, A-318 and A-363. In UAF1(11A); does not affect ability to promote USP1-mediated deubiquitination of FANCD2 and stimulate RAD51-mediated homologous recombination, because of DNA-binding mediated by RAD51AP1; when associated with A-30, A-50, A-117, A-161, A-168, A-230, A-272, A-274, A-318 and A-363." evidence="18">
    <original>K</original>
    <variation>A</variation>
    <location>
        <position position="275"/>
    </location>
</feature>
<feature type="mutagenesis site" description="In UAF1(11A); impaired DNA-binding; when associated with A-30, A-50, A-117, A-161, A-168, A-230, A-272, A-274, A-275 and A-363. In UAF1(11A); does not affect ability to promote USP1-mediated deubiquitination of FANCD2 and stimulate RAD51-mediated homologous recombination, because of DNA-binding mediated by RAD51AP1; when associated with A-30, A-50, A-117, A-161, A-168, A-230, A-272, A-274, A-275 and A-363." evidence="18">
    <original>K</original>
    <variation>A</variation>
    <location>
        <position position="318"/>
    </location>
</feature>
<feature type="mutagenesis site" description="In UAF1(11A); impaired DNA-binding; when associated with A-30, A-50, A-117, A-161, A-168, A-230, A-272, A-274, A-275 and A-318. In UAF1(11A); does not affect ability to promote USP1-mediated deubiquitination of FANCD2 and stimulate RAD51-mediated homologous recombination, because of DNA-binding mediated by RAD51AP1; when associated with A-30, A-50, A-117, A-161, A-168, A-230, A-272, A-274, A-275 and A-318." evidence="18">
    <original>I</original>
    <variation>A</variation>
    <location>
        <position position="363"/>
    </location>
</feature>
<feature type="mutagenesis site" description="Decreased interaction with RAD51AP1." evidence="14">
    <original>K</original>
    <variation>E</variation>
    <location>
        <position position="459"/>
    </location>
</feature>
<feature type="mutagenesis site" description="Impaired binding to PHLPP1. Defective in stabilizing PHLPP1." evidence="11">
    <original>L</original>
    <variation>F</variation>
    <location>
        <position position="580"/>
    </location>
</feature>
<feature type="mutagenesis site" description="Decreased interaction with RAD51AP1." evidence="14">
    <original>KVMEH</original>
    <variation>EVMEA</variation>
    <location>
        <begin position="595"/>
        <end position="599"/>
    </location>
</feature>
<feature type="mutagenesis site" description="Does not affect interaction with RAD51AP1." evidence="14">
    <original>K</original>
    <variation>E</variation>
    <location>
        <position position="595"/>
    </location>
</feature>
<feature type="mutagenesis site" description="Does not affect interaction with RAD51AP1." evidence="14">
    <original>H</original>
    <variation>A</variation>
    <location>
        <position position="599"/>
    </location>
</feature>
<feature type="sequence conflict" description="In Ref. 6; AAH37168." evidence="29" ref="6">
    <original>T</original>
    <variation>A</variation>
    <location>
        <position position="161"/>
    </location>
</feature>
<feature type="sequence conflict" description="In Ref. 4; BAG63646." evidence="29" ref="4">
    <original>I</original>
    <variation>V</variation>
    <location>
        <position position="286"/>
    </location>
</feature>
<feature type="sequence conflict" description="In Ref. 4; BAG63646." evidence="29" ref="4">
    <original>S</original>
    <variation>F</variation>
    <location>
        <position position="319"/>
    </location>
</feature>
<feature type="sequence conflict" description="In Ref. 4; BAG63646." evidence="29" ref="4">
    <original>G</original>
    <variation>E</variation>
    <location>
        <position position="328"/>
    </location>
</feature>
<feature type="sequence conflict" description="In Ref. 4; BAG63646." evidence="29" ref="4">
    <original>L</original>
    <variation>P</variation>
    <location>
        <position position="585"/>
    </location>
</feature>
<feature type="strand" evidence="43">
    <location>
        <begin position="15"/>
        <end position="21"/>
    </location>
</feature>
<feature type="strand" evidence="46">
    <location>
        <begin position="28"/>
        <end position="31"/>
    </location>
</feature>
<feature type="strand" evidence="43">
    <location>
        <begin position="33"/>
        <end position="39"/>
    </location>
</feature>
<feature type="turn" evidence="43">
    <location>
        <begin position="40"/>
        <end position="43"/>
    </location>
</feature>
<feature type="strand" evidence="43">
    <location>
        <begin position="44"/>
        <end position="49"/>
    </location>
</feature>
<feature type="strand" evidence="43">
    <location>
        <begin position="54"/>
        <end position="58"/>
    </location>
</feature>
<feature type="strand" evidence="43">
    <location>
        <begin position="67"/>
        <end position="71"/>
    </location>
</feature>
<feature type="strand" evidence="43">
    <location>
        <begin position="78"/>
        <end position="84"/>
    </location>
</feature>
<feature type="turn" evidence="43">
    <location>
        <begin position="85"/>
        <end position="88"/>
    </location>
</feature>
<feature type="strand" evidence="43">
    <location>
        <begin position="89"/>
        <end position="94"/>
    </location>
</feature>
<feature type="strand" evidence="43">
    <location>
        <begin position="99"/>
        <end position="103"/>
    </location>
</feature>
<feature type="turn" evidence="43">
    <location>
        <begin position="104"/>
        <end position="107"/>
    </location>
</feature>
<feature type="strand" evidence="43">
    <location>
        <begin position="108"/>
        <end position="113"/>
    </location>
</feature>
<feature type="strand" evidence="43">
    <location>
        <begin position="120"/>
        <end position="126"/>
    </location>
</feature>
<feature type="helix" evidence="43">
    <location>
        <begin position="127"/>
        <end position="129"/>
    </location>
</feature>
<feature type="strand" evidence="43">
    <location>
        <begin position="131"/>
        <end position="136"/>
    </location>
</feature>
<feature type="strand" evidence="43">
    <location>
        <begin position="141"/>
        <end position="145"/>
    </location>
</feature>
<feature type="helix" evidence="43">
    <location>
        <begin position="146"/>
        <end position="150"/>
    </location>
</feature>
<feature type="strand" evidence="43">
    <location>
        <begin position="154"/>
        <end position="156"/>
    </location>
</feature>
<feature type="strand" evidence="43">
    <location>
        <begin position="158"/>
        <end position="161"/>
    </location>
</feature>
<feature type="strand" evidence="44">
    <location>
        <begin position="162"/>
        <end position="164"/>
    </location>
</feature>
<feature type="strand" evidence="43">
    <location>
        <begin position="171"/>
        <end position="176"/>
    </location>
</feature>
<feature type="strand" evidence="45">
    <location>
        <begin position="178"/>
        <end position="180"/>
    </location>
</feature>
<feature type="strand" evidence="43">
    <location>
        <begin position="183"/>
        <end position="187"/>
    </location>
</feature>
<feature type="strand" evidence="43">
    <location>
        <begin position="191"/>
        <end position="195"/>
    </location>
</feature>
<feature type="turn" evidence="43">
    <location>
        <begin position="197"/>
        <end position="199"/>
    </location>
</feature>
<feature type="strand" evidence="43">
    <location>
        <begin position="202"/>
        <end position="206"/>
    </location>
</feature>
<feature type="strand" evidence="43">
    <location>
        <begin position="213"/>
        <end position="218"/>
    </location>
</feature>
<feature type="strand" evidence="43">
    <location>
        <begin position="222"/>
        <end position="229"/>
    </location>
</feature>
<feature type="strand" evidence="43">
    <location>
        <begin position="234"/>
        <end position="238"/>
    </location>
</feature>
<feature type="turn" evidence="43">
    <location>
        <begin position="239"/>
        <end position="242"/>
    </location>
</feature>
<feature type="strand" evidence="43">
    <location>
        <begin position="243"/>
        <end position="248"/>
    </location>
</feature>
<feature type="strand" evidence="43">
    <location>
        <begin position="255"/>
        <end position="260"/>
    </location>
</feature>
<feature type="strand" evidence="43">
    <location>
        <begin position="266"/>
        <end position="271"/>
    </location>
</feature>
<feature type="strand" evidence="43">
    <location>
        <begin position="275"/>
        <end position="282"/>
    </location>
</feature>
<feature type="strand" evidence="43">
    <location>
        <begin position="287"/>
        <end position="292"/>
    </location>
</feature>
<feature type="strand" evidence="43">
    <location>
        <begin position="297"/>
        <end position="302"/>
    </location>
</feature>
<feature type="strand" evidence="43">
    <location>
        <begin position="305"/>
        <end position="308"/>
    </location>
</feature>
<feature type="strand" evidence="43">
    <location>
        <begin position="310"/>
        <end position="319"/>
    </location>
</feature>
<feature type="strand" evidence="43">
    <location>
        <begin position="321"/>
        <end position="325"/>
    </location>
</feature>
<feature type="helix" evidence="42">
    <location>
        <begin position="329"/>
        <end position="334"/>
    </location>
</feature>
<feature type="strand" evidence="43">
    <location>
        <begin position="354"/>
        <end position="357"/>
    </location>
</feature>
<feature type="strand" evidence="43">
    <location>
        <begin position="363"/>
        <end position="368"/>
    </location>
</feature>
<feature type="strand" evidence="43">
    <location>
        <begin position="372"/>
        <end position="379"/>
    </location>
</feature>
<feature type="strand" evidence="43">
    <location>
        <begin position="384"/>
        <end position="388"/>
    </location>
</feature>
<feature type="turn" evidence="43">
    <location>
        <begin position="389"/>
        <end position="392"/>
    </location>
</feature>
<feature type="strand" evidence="43">
    <location>
        <begin position="393"/>
        <end position="400"/>
    </location>
</feature>
<feature type="helix" evidence="43">
    <location>
        <begin position="403"/>
        <end position="409"/>
    </location>
</feature>
<feature type="strand" evidence="43">
    <location>
        <begin position="421"/>
        <end position="423"/>
    </location>
</feature>
<feature type="strand" evidence="43">
    <location>
        <begin position="427"/>
        <end position="433"/>
    </location>
</feature>
<feature type="turn" evidence="43">
    <location>
        <begin position="435"/>
        <end position="439"/>
    </location>
</feature>
<feature type="strand" evidence="43">
    <location>
        <begin position="442"/>
        <end position="444"/>
    </location>
</feature>
<feature type="turn" evidence="43">
    <location>
        <begin position="445"/>
        <end position="449"/>
    </location>
</feature>
<feature type="strand" evidence="44">
    <location>
        <begin position="453"/>
        <end position="455"/>
    </location>
</feature>
<feature type="strand" evidence="43">
    <location>
        <begin position="459"/>
        <end position="461"/>
    </location>
</feature>
<feature type="helix" evidence="43">
    <location>
        <begin position="462"/>
        <end position="470"/>
    </location>
</feature>
<feature type="turn" evidence="43">
    <location>
        <begin position="471"/>
        <end position="473"/>
    </location>
</feature>
<feature type="helix" evidence="43">
    <location>
        <begin position="475"/>
        <end position="477"/>
    </location>
</feature>
<feature type="strand" evidence="43">
    <location>
        <begin position="514"/>
        <end position="522"/>
    </location>
</feature>
<feature type="strand" evidence="43">
    <location>
        <begin position="524"/>
        <end position="529"/>
    </location>
</feature>
<feature type="helix" evidence="43">
    <location>
        <begin position="530"/>
        <end position="534"/>
    </location>
</feature>
<feature type="helix" evidence="43">
    <location>
        <begin position="536"/>
        <end position="545"/>
    </location>
</feature>
<feature type="helix" evidence="43">
    <location>
        <begin position="548"/>
        <end position="554"/>
    </location>
</feature>
<feature type="strand" evidence="43">
    <location>
        <begin position="564"/>
        <end position="571"/>
    </location>
</feature>
<feature type="strand" evidence="43">
    <location>
        <begin position="583"/>
        <end position="588"/>
    </location>
</feature>
<feature type="helix" evidence="43">
    <location>
        <begin position="593"/>
        <end position="603"/>
    </location>
</feature>
<feature type="helix" evidence="43">
    <location>
        <begin position="631"/>
        <end position="638"/>
    </location>
</feature>
<feature type="strand" evidence="43">
    <location>
        <begin position="639"/>
        <end position="643"/>
    </location>
</feature>
<feature type="helix" evidence="43">
    <location>
        <begin position="654"/>
        <end position="660"/>
    </location>
</feature>
<feature type="strand" evidence="43">
    <location>
        <begin position="664"/>
        <end position="674"/>
    </location>
</feature>
<organism evidence="31">
    <name type="scientific">Homo sapiens</name>
    <name type="common">Human</name>
    <dbReference type="NCBI Taxonomy" id="9606"/>
    <lineage>
        <taxon>Eukaryota</taxon>
        <taxon>Metazoa</taxon>
        <taxon>Chordata</taxon>
        <taxon>Craniata</taxon>
        <taxon>Vertebrata</taxon>
        <taxon>Euteleostomi</taxon>
        <taxon>Mammalia</taxon>
        <taxon>Eutheria</taxon>
        <taxon>Euarchontoglires</taxon>
        <taxon>Primates</taxon>
        <taxon>Haplorrhini</taxon>
        <taxon>Catarrhini</taxon>
        <taxon>Hominidae</taxon>
        <taxon>Homo</taxon>
    </lineage>
</organism>
<protein>
    <recommendedName>
        <fullName evidence="28">WD repeat-containing protein 48</fullName>
    </recommendedName>
    <alternativeName>
        <fullName evidence="27">USP1-associated factor 1</fullName>
    </alternativeName>
    <alternativeName>
        <fullName>WD repeat endosomal protein</fullName>
    </alternativeName>
    <alternativeName>
        <fullName evidence="24">p80</fullName>
    </alternativeName>
</protein>
<accession>Q8TAF3</accession>
<accession>B4DM86</accession>
<accession>B4DQI2</accession>
<accession>B4DY84</accession>
<accession>Q63HJ2</accession>
<accession>Q658Y1</accession>
<accession>Q8N3Z1</accession>
<accession>Q9NSK8</accession>
<accession>Q9P279</accession>
<gene>
    <name evidence="28 30" type="primary">WDR48</name>
    <name evidence="23" type="synonym">KIAA1449</name>
    <name evidence="27" type="synonym">UAF1</name>
</gene>
<dbReference type="EMBL" id="AF468833">
    <property type="protein sequence ID" value="AAL78650.1"/>
    <property type="molecule type" value="mRNA"/>
</dbReference>
<dbReference type="EMBL" id="AB040882">
    <property type="protein sequence ID" value="BAA95973.2"/>
    <property type="status" value="ALT_INIT"/>
    <property type="molecule type" value="mRNA"/>
</dbReference>
<dbReference type="EMBL" id="AK297349">
    <property type="protein sequence ID" value="BAG59798.1"/>
    <property type="molecule type" value="mRNA"/>
</dbReference>
<dbReference type="EMBL" id="AK298810">
    <property type="protein sequence ID" value="BAG60944.1"/>
    <property type="molecule type" value="mRNA"/>
</dbReference>
<dbReference type="EMBL" id="AK302307">
    <property type="protein sequence ID" value="BAG63646.1"/>
    <property type="molecule type" value="mRNA"/>
</dbReference>
<dbReference type="EMBL" id="AL162064">
    <property type="protein sequence ID" value="CAB82402.1"/>
    <property type="molecule type" value="mRNA"/>
</dbReference>
<dbReference type="EMBL" id="AL832926">
    <property type="protein sequence ID" value="CAH56300.1"/>
    <property type="status" value="ALT_INIT"/>
    <property type="molecule type" value="mRNA"/>
</dbReference>
<dbReference type="EMBL" id="BX649170">
    <property type="protein sequence ID" value="CAH56182.1"/>
    <property type="status" value="ALT_INIT"/>
    <property type="molecule type" value="mRNA"/>
</dbReference>
<dbReference type="EMBL" id="BC026353">
    <property type="protein sequence ID" value="AAH26353.1"/>
    <property type="molecule type" value="mRNA"/>
</dbReference>
<dbReference type="EMBL" id="BC037168">
    <property type="protein sequence ID" value="AAH37168.1"/>
    <property type="status" value="ALT_INIT"/>
    <property type="molecule type" value="mRNA"/>
</dbReference>
<dbReference type="CCDS" id="CCDS33738.1">
    <molecule id="Q8TAF3-1"/>
</dbReference>
<dbReference type="PIR" id="T47168">
    <property type="entry name" value="T47168"/>
</dbReference>
<dbReference type="RefSeq" id="NP_001290331.1">
    <molecule id="Q8TAF3-4"/>
    <property type="nucleotide sequence ID" value="NM_001303402.2"/>
</dbReference>
<dbReference type="RefSeq" id="NP_001290332.1">
    <molecule id="Q8TAF3-3"/>
    <property type="nucleotide sequence ID" value="NM_001303403.2"/>
</dbReference>
<dbReference type="RefSeq" id="NP_001333156.1">
    <property type="nucleotide sequence ID" value="NM_001346227.1"/>
</dbReference>
<dbReference type="RefSeq" id="NP_001333157.1">
    <property type="nucleotide sequence ID" value="NM_001346228.1"/>
</dbReference>
<dbReference type="RefSeq" id="NP_065890.1">
    <molecule id="Q8TAF3-1"/>
    <property type="nucleotide sequence ID" value="NM_020839.4"/>
</dbReference>
<dbReference type="PDB" id="5CVL">
    <property type="method" value="X-ray"/>
    <property type="resolution" value="3.00 A"/>
    <property type="chains" value="A=2-580"/>
</dbReference>
<dbReference type="PDB" id="5CVN">
    <property type="method" value="X-ray"/>
    <property type="resolution" value="3.36 A"/>
    <property type="chains" value="A=2-580"/>
</dbReference>
<dbReference type="PDB" id="5CVO">
    <property type="method" value="X-ray"/>
    <property type="resolution" value="3.88 A"/>
    <property type="chains" value="A/D=1-677"/>
</dbReference>
<dbReference type="PDB" id="5K1A">
    <property type="method" value="X-ray"/>
    <property type="resolution" value="2.30 A"/>
    <property type="chains" value="B/D/F/H=1-677"/>
</dbReference>
<dbReference type="PDB" id="5K1B">
    <property type="method" value="X-ray"/>
    <property type="resolution" value="3.30 A"/>
    <property type="chains" value="B=1-677"/>
</dbReference>
<dbReference type="PDB" id="5K1C">
    <property type="method" value="X-ray"/>
    <property type="resolution" value="3.00 A"/>
    <property type="chains" value="B=1-563"/>
</dbReference>
<dbReference type="PDB" id="5L8E">
    <property type="method" value="X-ray"/>
    <property type="resolution" value="2.30 A"/>
    <property type="chains" value="A/B=9-580"/>
</dbReference>
<dbReference type="PDB" id="5L8W">
    <property type="method" value="X-ray"/>
    <property type="resolution" value="2.79 A"/>
    <property type="chains" value="B=9-580"/>
</dbReference>
<dbReference type="PDB" id="6JLQ">
    <property type="method" value="X-ray"/>
    <property type="resolution" value="3.10 A"/>
    <property type="chains" value="B=1-580"/>
</dbReference>
<dbReference type="PDB" id="7AY0">
    <property type="method" value="X-ray"/>
    <property type="resolution" value="3.60 A"/>
    <property type="chains" value="A/C=1-563"/>
</dbReference>
<dbReference type="PDB" id="7AY1">
    <property type="method" value="EM"/>
    <property type="resolution" value="3.70 A"/>
    <property type="chains" value="E=1-677"/>
</dbReference>
<dbReference type="PDB" id="7AY2">
    <property type="method" value="X-ray"/>
    <property type="resolution" value="3.20 A"/>
    <property type="chains" value="A/D=1-563"/>
</dbReference>
<dbReference type="PDB" id="8A9J">
    <property type="method" value="EM"/>
    <property type="resolution" value="2.80 A"/>
    <property type="chains" value="E=1-677"/>
</dbReference>
<dbReference type="PDB" id="8A9K">
    <property type="method" value="EM"/>
    <property type="resolution" value="2.85 A"/>
    <property type="chains" value="E=1-677"/>
</dbReference>
<dbReference type="PDB" id="9EBS">
    <property type="method" value="EM"/>
    <property type="resolution" value="3.30 A"/>
    <property type="chains" value="D=1-677"/>
</dbReference>
<dbReference type="PDB" id="9HNW">
    <property type="method" value="EM"/>
    <property type="resolution" value="3.04 A"/>
    <property type="chains" value="B=1-672"/>
</dbReference>
<dbReference type="PDBsum" id="5CVL"/>
<dbReference type="PDBsum" id="5CVN"/>
<dbReference type="PDBsum" id="5CVO"/>
<dbReference type="PDBsum" id="5K1A"/>
<dbReference type="PDBsum" id="5K1B"/>
<dbReference type="PDBsum" id="5K1C"/>
<dbReference type="PDBsum" id="5L8E"/>
<dbReference type="PDBsum" id="5L8W"/>
<dbReference type="PDBsum" id="6JLQ"/>
<dbReference type="PDBsum" id="7AY0"/>
<dbReference type="PDBsum" id="7AY1"/>
<dbReference type="PDBsum" id="7AY2"/>
<dbReference type="PDBsum" id="8A9J"/>
<dbReference type="PDBsum" id="8A9K"/>
<dbReference type="PDBsum" id="9EBS"/>
<dbReference type="PDBsum" id="9HNW"/>
<dbReference type="EMDB" id="EMD-11934"/>
<dbReference type="EMDB" id="EMD-14722"/>
<dbReference type="EMDB" id="EMD-15284"/>
<dbReference type="EMDB" id="EMD-47889"/>
<dbReference type="EMDB" id="EMD-52316"/>
<dbReference type="SMR" id="Q8TAF3"/>
<dbReference type="BioGRID" id="121649">
    <property type="interactions" value="165"/>
</dbReference>
<dbReference type="ComplexPortal" id="CPX-9281">
    <property type="entry name" value="USP46 deubiquitinase complex"/>
</dbReference>
<dbReference type="ComplexPortal" id="CPX-9361">
    <property type="entry name" value="USP12-WDR20 deubiquitinase complex"/>
</dbReference>
<dbReference type="ComplexPortal" id="CPX-9381">
    <property type="entry name" value="USP12-DMWD deubiquitinase complex"/>
</dbReference>
<dbReference type="ComplexPortal" id="CPX-9442">
    <property type="entry name" value="USP1-UAF1 deubiquitinase complex"/>
</dbReference>
<dbReference type="CORUM" id="Q8TAF3"/>
<dbReference type="DIP" id="DIP-50841N"/>
<dbReference type="FunCoup" id="Q8TAF3">
    <property type="interactions" value="5826"/>
</dbReference>
<dbReference type="IntAct" id="Q8TAF3">
    <property type="interactions" value="109"/>
</dbReference>
<dbReference type="MINT" id="Q8TAF3"/>
<dbReference type="STRING" id="9606.ENSP00000307491"/>
<dbReference type="BindingDB" id="Q8TAF3"/>
<dbReference type="ChEMBL" id="CHEMBL3351203"/>
<dbReference type="GlyGen" id="Q8TAF3">
    <property type="glycosylation" value="1 site, 1 O-linked glycan (1 site)"/>
</dbReference>
<dbReference type="iPTMnet" id="Q8TAF3"/>
<dbReference type="PhosphoSitePlus" id="Q8TAF3"/>
<dbReference type="SwissPalm" id="Q8TAF3"/>
<dbReference type="BioMuta" id="WDR48"/>
<dbReference type="DMDM" id="74760390"/>
<dbReference type="jPOST" id="Q8TAF3"/>
<dbReference type="MassIVE" id="Q8TAF3"/>
<dbReference type="PaxDb" id="9606-ENSP00000307491"/>
<dbReference type="PeptideAtlas" id="Q8TAF3"/>
<dbReference type="ProteomicsDB" id="73870">
    <molecule id="Q8TAF3-1"/>
</dbReference>
<dbReference type="ProteomicsDB" id="73871">
    <molecule id="Q8TAF3-2"/>
</dbReference>
<dbReference type="ProteomicsDB" id="73872">
    <molecule id="Q8TAF3-3"/>
</dbReference>
<dbReference type="ProteomicsDB" id="73873">
    <molecule id="Q8TAF3-4"/>
</dbReference>
<dbReference type="ProteomicsDB" id="73874">
    <molecule id="Q8TAF3-5"/>
</dbReference>
<dbReference type="Pumba" id="Q8TAF3"/>
<dbReference type="Antibodypedia" id="50460">
    <property type="antibodies" value="124 antibodies from 25 providers"/>
</dbReference>
<dbReference type="DNASU" id="57599"/>
<dbReference type="Ensembl" id="ENST00000302313.10">
    <molecule id="Q8TAF3-1"/>
    <property type="protein sequence ID" value="ENSP00000307491.5"/>
    <property type="gene ID" value="ENSG00000114742.14"/>
</dbReference>
<dbReference type="GeneID" id="57599"/>
<dbReference type="KEGG" id="hsa:57599"/>
<dbReference type="MANE-Select" id="ENST00000302313.10">
    <property type="protein sequence ID" value="ENSP00000307491.5"/>
    <property type="RefSeq nucleotide sequence ID" value="NM_020839.4"/>
    <property type="RefSeq protein sequence ID" value="NP_065890.1"/>
</dbReference>
<dbReference type="UCSC" id="uc003cit.4">
    <molecule id="Q8TAF3-1"/>
    <property type="organism name" value="human"/>
</dbReference>
<dbReference type="AGR" id="HGNC:30914"/>
<dbReference type="CTD" id="57599"/>
<dbReference type="DisGeNET" id="57599"/>
<dbReference type="GeneCards" id="WDR48"/>
<dbReference type="HGNC" id="HGNC:30914">
    <property type="gene designation" value="WDR48"/>
</dbReference>
<dbReference type="HPA" id="ENSG00000114742">
    <property type="expression patterns" value="Low tissue specificity"/>
</dbReference>
<dbReference type="MalaCards" id="WDR48"/>
<dbReference type="MIM" id="612167">
    <property type="type" value="gene"/>
</dbReference>
<dbReference type="neXtProt" id="NX_Q8TAF3"/>
<dbReference type="OpenTargets" id="ENSG00000114742"/>
<dbReference type="Orphanet" id="401800">
    <property type="disease" value="Autosomal recessive spastic paraplegia type 60"/>
</dbReference>
<dbReference type="PharmGKB" id="PA134956949"/>
<dbReference type="VEuPathDB" id="HostDB:ENSG00000114742"/>
<dbReference type="eggNOG" id="KOG0308">
    <property type="taxonomic scope" value="Eukaryota"/>
</dbReference>
<dbReference type="GeneTree" id="ENSGT00920000149157"/>
<dbReference type="HOGENOM" id="CLU_014960_0_1_1"/>
<dbReference type="InParanoid" id="Q8TAF3"/>
<dbReference type="OMA" id="IRHYHIL"/>
<dbReference type="OrthoDB" id="2421129at2759"/>
<dbReference type="PAN-GO" id="Q8TAF3">
    <property type="GO annotations" value="3 GO annotations based on evolutionary models"/>
</dbReference>
<dbReference type="PhylomeDB" id="Q8TAF3"/>
<dbReference type="TreeFam" id="TF315205"/>
<dbReference type="PathwayCommons" id="Q8TAF3"/>
<dbReference type="Reactome" id="R-HSA-110314">
    <property type="pathway name" value="Recognition of DNA damage by PCNA-containing replication complex"/>
</dbReference>
<dbReference type="Reactome" id="R-HSA-5689880">
    <property type="pathway name" value="Ub-specific processing proteases"/>
</dbReference>
<dbReference type="Reactome" id="R-HSA-6783310">
    <property type="pathway name" value="Fanconi Anemia Pathway"/>
</dbReference>
<dbReference type="Reactome" id="R-HSA-9673766">
    <property type="pathway name" value="Signaling by cytosolic PDGFRA and PDGFRB fusion proteins"/>
</dbReference>
<dbReference type="SignaLink" id="Q8TAF3"/>
<dbReference type="SIGNOR" id="Q8TAF3"/>
<dbReference type="BioGRID-ORCS" id="57599">
    <property type="hits" value="261 hits in 1171 CRISPR screens"/>
</dbReference>
<dbReference type="CD-CODE" id="FB4E32DD">
    <property type="entry name" value="Presynaptic clusters and postsynaptic densities"/>
</dbReference>
<dbReference type="ChiTaRS" id="WDR48">
    <property type="organism name" value="human"/>
</dbReference>
<dbReference type="EvolutionaryTrace" id="Q8TAF3"/>
<dbReference type="GenomeRNAi" id="57599"/>
<dbReference type="Pharos" id="Q8TAF3">
    <property type="development level" value="Tbio"/>
</dbReference>
<dbReference type="PRO" id="PR:Q8TAF3"/>
<dbReference type="Proteomes" id="UP000005640">
    <property type="component" value="Chromosome 3"/>
</dbReference>
<dbReference type="RNAct" id="Q8TAF3">
    <property type="molecule type" value="protein"/>
</dbReference>
<dbReference type="Bgee" id="ENSG00000114742">
    <property type="expression patterns" value="Expressed in ventricular zone and 212 other cell types or tissues"/>
</dbReference>
<dbReference type="ExpressionAtlas" id="Q8TAF3">
    <property type="expression patterns" value="baseline and differential"/>
</dbReference>
<dbReference type="GO" id="GO:0005737">
    <property type="term" value="C:cytoplasm"/>
    <property type="evidence" value="ECO:0000314"/>
    <property type="project" value="UniProt"/>
</dbReference>
<dbReference type="GO" id="GO:0005829">
    <property type="term" value="C:cytosol"/>
    <property type="evidence" value="ECO:0000304"/>
    <property type="project" value="Reactome"/>
</dbReference>
<dbReference type="GO" id="GO:0043231">
    <property type="term" value="C:intracellular membrane-bounded organelle"/>
    <property type="evidence" value="ECO:0000314"/>
    <property type="project" value="HPA"/>
</dbReference>
<dbReference type="GO" id="GO:0005770">
    <property type="term" value="C:late endosome"/>
    <property type="evidence" value="ECO:0007669"/>
    <property type="project" value="UniProtKB-SubCell"/>
</dbReference>
<dbReference type="GO" id="GO:0005764">
    <property type="term" value="C:lysosome"/>
    <property type="evidence" value="ECO:0007669"/>
    <property type="project" value="UniProtKB-SubCell"/>
</dbReference>
<dbReference type="GO" id="GO:0005654">
    <property type="term" value="C:nucleoplasm"/>
    <property type="evidence" value="ECO:0000304"/>
    <property type="project" value="Reactome"/>
</dbReference>
<dbReference type="GO" id="GO:0005634">
    <property type="term" value="C:nucleus"/>
    <property type="evidence" value="ECO:0000314"/>
    <property type="project" value="UniProtKB"/>
</dbReference>
<dbReference type="GO" id="GO:0035800">
    <property type="term" value="F:deubiquitinase activator activity"/>
    <property type="evidence" value="ECO:0000314"/>
    <property type="project" value="UniProtKB"/>
</dbReference>
<dbReference type="GO" id="GO:0003677">
    <property type="term" value="F:DNA binding"/>
    <property type="evidence" value="ECO:0000314"/>
    <property type="project" value="UniProtKB"/>
</dbReference>
<dbReference type="GO" id="GO:0003690">
    <property type="term" value="F:double-stranded DNA binding"/>
    <property type="evidence" value="ECO:0000314"/>
    <property type="project" value="UniProtKB"/>
</dbReference>
<dbReference type="GO" id="GO:0003697">
    <property type="term" value="F:single-stranded DNA binding"/>
    <property type="evidence" value="ECO:0000314"/>
    <property type="project" value="UniProtKB"/>
</dbReference>
<dbReference type="GO" id="GO:0043130">
    <property type="term" value="F:ubiquitin binding"/>
    <property type="evidence" value="ECO:0000318"/>
    <property type="project" value="GO_Central"/>
</dbReference>
<dbReference type="GO" id="GO:0006974">
    <property type="term" value="P:DNA damage response"/>
    <property type="evidence" value="ECO:0000314"/>
    <property type="project" value="UniProtKB"/>
</dbReference>
<dbReference type="GO" id="GO:0000724">
    <property type="term" value="P:double-strand break repair via homologous recombination"/>
    <property type="evidence" value="ECO:0000318"/>
    <property type="project" value="GO_Central"/>
</dbReference>
<dbReference type="GO" id="GO:0048568">
    <property type="term" value="P:embryonic organ development"/>
    <property type="evidence" value="ECO:0007669"/>
    <property type="project" value="Ensembl"/>
</dbReference>
<dbReference type="GO" id="GO:0048872">
    <property type="term" value="P:homeostasis of number of cells"/>
    <property type="evidence" value="ECO:0007669"/>
    <property type="project" value="Ensembl"/>
</dbReference>
<dbReference type="GO" id="GO:0035264">
    <property type="term" value="P:multicellular organism growth"/>
    <property type="evidence" value="ECO:0007669"/>
    <property type="project" value="Ensembl"/>
</dbReference>
<dbReference type="GO" id="GO:1905168">
    <property type="term" value="P:positive regulation of double-strand break repair via homologous recombination"/>
    <property type="evidence" value="ECO:0000314"/>
    <property type="project" value="UniProtKB"/>
</dbReference>
<dbReference type="GO" id="GO:0050679">
    <property type="term" value="P:positive regulation of epithelial cell proliferation"/>
    <property type="evidence" value="ECO:0007669"/>
    <property type="project" value="Ensembl"/>
</dbReference>
<dbReference type="GO" id="GO:0046427">
    <property type="term" value="P:positive regulation of receptor signaling pathway via JAK-STAT"/>
    <property type="evidence" value="ECO:0000314"/>
    <property type="project" value="UniProt"/>
</dbReference>
<dbReference type="GO" id="GO:1902525">
    <property type="term" value="P:regulation of protein monoubiquitination"/>
    <property type="evidence" value="ECO:0007669"/>
    <property type="project" value="Ensembl"/>
</dbReference>
<dbReference type="GO" id="GO:0072520">
    <property type="term" value="P:seminiferous tubule development"/>
    <property type="evidence" value="ECO:0007669"/>
    <property type="project" value="Ensembl"/>
</dbReference>
<dbReference type="GO" id="GO:0007338">
    <property type="term" value="P:single fertilization"/>
    <property type="evidence" value="ECO:0007669"/>
    <property type="project" value="Ensembl"/>
</dbReference>
<dbReference type="GO" id="GO:0048705">
    <property type="term" value="P:skeletal system morphogenesis"/>
    <property type="evidence" value="ECO:0007669"/>
    <property type="project" value="Ensembl"/>
</dbReference>
<dbReference type="GO" id="GO:0043588">
    <property type="term" value="P:skin development"/>
    <property type="evidence" value="ECO:0007669"/>
    <property type="project" value="Ensembl"/>
</dbReference>
<dbReference type="GO" id="GO:0007283">
    <property type="term" value="P:spermatogenesis"/>
    <property type="evidence" value="ECO:0007669"/>
    <property type="project" value="Ensembl"/>
</dbReference>
<dbReference type="CDD" id="cd17041">
    <property type="entry name" value="Ubl_WDR48"/>
    <property type="match status" value="1"/>
</dbReference>
<dbReference type="CDD" id="cd00200">
    <property type="entry name" value="WD40"/>
    <property type="match status" value="1"/>
</dbReference>
<dbReference type="FunFam" id="2.130.10.10:FF:000054">
    <property type="entry name" value="Putative WD repeat-containing protein 48"/>
    <property type="match status" value="1"/>
</dbReference>
<dbReference type="FunFam" id="2.130.10.10:FF:002031">
    <property type="entry name" value="WD repeat domain 48b"/>
    <property type="match status" value="1"/>
</dbReference>
<dbReference type="Gene3D" id="2.130.10.10">
    <property type="entry name" value="YVTN repeat-like/Quinoprotein amine dehydrogenase"/>
    <property type="match status" value="2"/>
</dbReference>
<dbReference type="InterPro" id="IPR020472">
    <property type="entry name" value="G-protein_beta_WD-40_rep"/>
</dbReference>
<dbReference type="InterPro" id="IPR015943">
    <property type="entry name" value="WD40/YVTN_repeat-like_dom_sf"/>
</dbReference>
<dbReference type="InterPro" id="IPR019775">
    <property type="entry name" value="WD40_repeat_CS"/>
</dbReference>
<dbReference type="InterPro" id="IPR036322">
    <property type="entry name" value="WD40_repeat_dom_sf"/>
</dbReference>
<dbReference type="InterPro" id="IPR001680">
    <property type="entry name" value="WD40_rpt"/>
</dbReference>
<dbReference type="InterPro" id="IPR051246">
    <property type="entry name" value="WDR48"/>
</dbReference>
<dbReference type="InterPro" id="IPR021772">
    <property type="entry name" value="WDR48/Bun107"/>
</dbReference>
<dbReference type="PANTHER" id="PTHR19862">
    <property type="entry name" value="WD REPEAT-CONTAINING PROTEIN 48"/>
    <property type="match status" value="1"/>
</dbReference>
<dbReference type="PANTHER" id="PTHR19862:SF14">
    <property type="entry name" value="WD REPEAT-CONTAINING PROTEIN 48"/>
    <property type="match status" value="1"/>
</dbReference>
<dbReference type="Pfam" id="PF11816">
    <property type="entry name" value="DUF3337"/>
    <property type="match status" value="1"/>
</dbReference>
<dbReference type="Pfam" id="PF00400">
    <property type="entry name" value="WD40"/>
    <property type="match status" value="6"/>
</dbReference>
<dbReference type="PRINTS" id="PR00320">
    <property type="entry name" value="GPROTEINBRPT"/>
</dbReference>
<dbReference type="SMART" id="SM00320">
    <property type="entry name" value="WD40"/>
    <property type="match status" value="7"/>
</dbReference>
<dbReference type="SUPFAM" id="SSF50978">
    <property type="entry name" value="WD40 repeat-like"/>
    <property type="match status" value="1"/>
</dbReference>
<dbReference type="PROSITE" id="PS00678">
    <property type="entry name" value="WD_REPEATS_1"/>
    <property type="match status" value="2"/>
</dbReference>
<dbReference type="PROSITE" id="PS50082">
    <property type="entry name" value="WD_REPEATS_2"/>
    <property type="match status" value="5"/>
</dbReference>
<dbReference type="PROSITE" id="PS50294">
    <property type="entry name" value="WD_REPEATS_REGION"/>
    <property type="match status" value="4"/>
</dbReference>
<keyword id="KW-0002">3D-structure</keyword>
<keyword id="KW-0007">Acetylation</keyword>
<keyword id="KW-0025">Alternative splicing</keyword>
<keyword id="KW-0963">Cytoplasm</keyword>
<keyword id="KW-0227">DNA damage</keyword>
<keyword id="KW-0234">DNA repair</keyword>
<keyword id="KW-0238">DNA-binding</keyword>
<keyword id="KW-0967">Endosome</keyword>
<keyword id="KW-0945">Host-virus interaction</keyword>
<keyword id="KW-0458">Lysosome</keyword>
<keyword id="KW-0539">Nucleus</keyword>
<keyword id="KW-0597">Phosphoprotein</keyword>
<keyword id="KW-1267">Proteomics identification</keyword>
<keyword id="KW-1185">Reference proteome</keyword>
<keyword id="KW-0677">Repeat</keyword>
<keyword id="KW-0833">Ubl conjugation pathway</keyword>
<keyword id="KW-0853">WD repeat</keyword>
<sequence>MAAHHRQNTAGRRKVQVSYVIRDEVEKYNRNGVNALQLDPALNRLFTAGRDSIIRIWSVNQHKQDPYIASMEHHTDWVNDIVLCCNGKTLISASSDTTVKVWNAHKGFCMSTLRTHKDYVKALAYAKDKELVASAGLDRQIFLWDVNTLTALTASNNTVTTSSLSGNKDSIYSLAMNQLGTIIVSGSTEKVLRVWDPRTCAKLMKLKGHTDNVKALLLNRDGTQCLSGSSDGTIRLWSLGQQRCIATYRVHDEGVWALQVNDAFTHVYSGGRDRKIYCTDLRNPDIRVLICEEKAPVLKMELDRSADPPPAIWVATTKSTVNKWTLKGIHNFRASGDYDNDCTNPITPLCTQPDQVIKGGASIIQCHILNDKRHILTKDTNNNVAYWDVLKACKVEDLGKVDFEDEIKKRFKMVYVPNWFSVDLKTGMLTITLDESDCFAAWVSAKDAGFSSPDGSDPKLNLGGLLLQALLEYWPRTHVNPMDEEENEVNHVNGEQENRVQKGNGYFQVPPHTPVIFGEAGGRTLFRLLCRDSGGETESMLLNETVPQWVIDITVDKNMPKFNKIPFYLQPHASSGAKTLKKDRLSASDMLQVRKVMEHVYEKIINLDNESQTTSSSNNEKPGEQEKEEDIAVLAEEKIELLCQDQVLDPNMDLRTVKHFIWKSGGDLTLHYRQKST</sequence>
<comment type="function">
    <text evidence="7 8 9 11 13 14 15 16 17 18 19 20">Regulator of deubiquitinating complexes, which acts as a strong activator of USP1, USP12 and USP46 (PubMed:18082604, PubMed:19075014, PubMed:26388029, PubMed:31253762). Enhances the USP1-mediated deubiquitination of FANCD2; USP1 being almost inactive by itself (PubMed:18082604, PubMed:31253762). Activates deubiquitination by increasing the catalytic turnover without increasing the affinity of deubiquitinating enzymes for the substrate (PubMed:19075014, PubMed:27373336). Also activates deubiquitinating activity of complexes containing USP12 (PubMed:19075014, PubMed:27373336, PubMed:27650958). In complex with USP12, acts as a potential tumor suppressor by positively regulating PHLPP1 stability (PubMed:24145035). Docks at the distal end of the USP12 fingers domain and induces a cascade of structural changes leading to the activation of the enzyme (PubMed:27373336, PubMed:27650958). Together with RAD51AP1, promotes DNA repair by stimulating RAD51-mediated homologous recombination (PubMed:27239033, PubMed:27463890, PubMed:32350107). Binds single-stranded DNA (ssDNA) and double-stranded DNA (dsDNA) (PubMed:27239033, PubMed:31253762, PubMed:32350107). DNA-binding is required both for USP1-mediated deubiquitination of FANCD2 and stimulation of RAD51-mediated homologous recombination: both WDR48/UAF1 and RAD51AP1 have coordinated role in DNA-binding during these processes (PubMed:31253762, PubMed:32350107). Together with ATAD5 and by regulating USP1 activity, has a role in PCNA-mediated translesion synthesis (TLS) by deubiquitinating monoubiquitinated PCNA (PubMed:20147293). Together with ATAD5, has a role in recruiting RAD51 to stalled forks during replication stress (PubMed:31844045).</text>
</comment>
<comment type="function">
    <text evidence="4 6">(Microbial infection) In case of infection by Herpesvirus saimiri, may play a role in vesicular transport or membrane fusion events necessary for transport to lysosomes. Induces lysosomal vesicle formation via interaction with Herpesvirus saimiri tyrosine kinase-interacting protein (TIP). Subsequently, TIP recruits tyrosine-protein kinase LCK, resulting in down-regulation of T-cell antigen receptor TCR. May play a role in generation of enlarged endosomal vesicles via interaction with TIP (PubMed:12196293). In case of infection by papillomavirus HPV11, promotes the maintenance of the viral genome via its interaction with HPV11 helicase E1 (PubMed:18032488).</text>
</comment>
<comment type="subunit">
    <text evidence="7 8 9 10 11 13 14 15 16 17 19 21">Interacts with USP46 (PubMed:19075014, PubMed:26388029). Interacts with USP1 (PubMed:18082604, PubMed:26388029). Interacts with USP12 (PubMed:19075014, PubMed:27373336, PubMed:27650958). Component of the USP12-WDR20-WDR48 deubiquitinating complex (PubMed:27373336). Component of the USP12-DMWD-WDR48 deubiquitinating complex (PubMed:33844468). Interacts with PHLPP1 (PubMed:24145035). Interacts with RAD51AP1; the interaction is direct and promotes formation of a trimeric complex with RAD51 via RAD51AP1 (PubMed:27239033, PubMed:27463890). Interacts with ATAD5; the interaction regulates USP1-mediated PCNA deubiquitination (PubMed:20147293). Interacts with RAD51; the interaction is enhanced under replication stress (PubMed:31844045). Interacts with ITCH; the interaction is more efficient when both USP12 and WDR48/UAF1 are involved and may facilitate recruitment of the USP12 deubiquitinating complex to Notch (PubMed:22778262).</text>
</comment>
<comment type="subunit">
    <text evidence="6">(Microbial infection) Interacts with papillomavirus HPV11 E1 protein.</text>
</comment>
<comment type="subunit">
    <text evidence="4 5">(Microbial infection) Interacts with Saimiriine herpesvirus TIP protein.</text>
</comment>
<comment type="subunit">
    <text evidence="22">(Microbial infection) Interacts with human cytomegalovirus protein UL138.</text>
</comment>
<comment type="subunit">
    <text evidence="6">(Microbial infection) Interacts with Epstein-Barr virus protein EBNA3.</text>
</comment>
<comment type="interaction">
    <interactant intactId="EBI-1045469">
        <id>Q8TAF3</id>
    </interactant>
    <interactant intactId="EBI-2513396">
        <id>O94782</id>
        <label>USP1</label>
    </interactant>
    <organismsDiffer>false</organismsDiffer>
    <experiments>8</experiments>
</comment>
<comment type="interaction">
    <interactant intactId="EBI-16178048">
        <id>Q8TAF3-1</id>
    </interactant>
    <interactant intactId="EBI-2513396">
        <id>O94782</id>
        <label>USP1</label>
    </interactant>
    <organismsDiffer>false</organismsDiffer>
    <experiments>2</experiments>
</comment>
<comment type="subcellular location">
    <subcellularLocation>
        <location evidence="6">Nucleus</location>
    </subcellularLocation>
    <subcellularLocation>
        <location evidence="4 6">Cytoplasm</location>
    </subcellularLocation>
    <subcellularLocation>
        <location evidence="4">Lysosome</location>
    </subcellularLocation>
    <subcellularLocation>
        <location evidence="4">Late endosome</location>
    </subcellularLocation>
    <text evidence="4 6">Mainly in cytoplasmic compartments (PubMed:12196293, PubMed:18032488). In case of infection by papillomavirus HPV11, translocates to the nucleus via its interaction with papillomavirus HPV11 (PubMed:18032488).</text>
</comment>
<comment type="alternative products">
    <event type="alternative splicing"/>
    <isoform>
        <id>Q8TAF3-1</id>
        <name>1</name>
        <sequence type="displayed"/>
    </isoform>
    <isoform>
        <id>Q8TAF3-2</id>
        <name>2</name>
        <sequence type="described" ref="VSP_016776 VSP_016777"/>
    </isoform>
    <isoform>
        <id>Q8TAF3-3</id>
        <name>3</name>
        <sequence type="described" ref="VSP_037625"/>
    </isoform>
    <isoform>
        <id>Q8TAF3-4</id>
        <name>4</name>
        <sequence type="described" ref="VSP_037623"/>
    </isoform>
    <isoform>
        <id>Q8TAF3-5</id>
        <name>5</name>
        <sequence type="described" ref="VSP_037624 VSP_037626"/>
    </isoform>
</comment>
<comment type="tissue specificity">
    <text evidence="4">Ubiquitous.</text>
</comment>
<comment type="domain">
    <text evidence="13 29">N-terminal WD region interacts with TIP and C-terminal region mediates lysosomal localization (Probable). The WD repeats are required for the interaction with deubiquitinating enzymes USP1, USP12 and USP46.</text>
</comment>
<comment type="miscellaneous">
    <text evidence="11">Knockdown of WDR48 increases Akt activation.</text>
</comment>
<comment type="similarity">
    <text evidence="29">Belongs to the WD repeat WDR48 family.</text>
</comment>
<comment type="sequence caution" evidence="29">
    <conflict type="erroneous initiation">
        <sequence resource="EMBL-CDS" id="AAH37168"/>
    </conflict>
</comment>
<comment type="sequence caution" evidence="29">
    <conflict type="erroneous initiation">
        <sequence resource="EMBL-CDS" id="BAA95973"/>
    </conflict>
</comment>
<comment type="sequence caution" evidence="29">
    <conflict type="erroneous initiation">
        <sequence resource="EMBL-CDS" id="CAH56182"/>
    </conflict>
</comment>
<comment type="sequence caution" evidence="29">
    <conflict type="erroneous initiation">
        <sequence resource="EMBL-CDS" id="CAH56300"/>
    </conflict>
</comment>
<reference key="1">
    <citation type="journal article" date="2002" name="Immunity">
        <title>Herpesviral protein targets a cellular WD repeat endosomal protein to downregulate T lymphocyte receptor expression.</title>
        <authorList>
            <person name="Park J."/>
            <person name="Lee B.-S."/>
            <person name="Choi J.-K."/>
            <person name="Means R.E."/>
            <person name="Choe J."/>
            <person name="Jung J.U."/>
        </authorList>
    </citation>
    <scope>NUCLEOTIDE SEQUENCE [MRNA] (ISOFORM 1)</scope>
    <scope>FUNCTION (MICROBIAL INFECTION)</scope>
    <scope>TISSUE SPECIFICITY</scope>
    <scope>SUBCELLULAR LOCATION</scope>
    <scope>INTERACTION WITH HERPESVIRUS SAIMIRI TIP (MICROBIAL INFECTION)</scope>
</reference>
<reference key="2">
    <citation type="journal article" date="2000" name="DNA Res.">
        <title>Prediction of the coding sequences of unidentified human genes. XVII. The complete sequences of 100 new cDNA clones from brain which code for large proteins in vitro.</title>
        <authorList>
            <person name="Nagase T."/>
            <person name="Kikuno R."/>
            <person name="Ishikawa K."/>
            <person name="Hirosawa M."/>
            <person name="Ohara O."/>
        </authorList>
    </citation>
    <scope>NUCLEOTIDE SEQUENCE [LARGE SCALE MRNA] (ISOFORM 1)</scope>
    <source>
        <tissue>Brain</tissue>
    </source>
</reference>
<reference key="3">
    <citation type="journal article" date="2002" name="DNA Res.">
        <title>Construction of expression-ready cDNA clones for KIAA genes: manual curation of 330 KIAA cDNA clones.</title>
        <authorList>
            <person name="Nakajima D."/>
            <person name="Okazaki N."/>
            <person name="Yamakawa H."/>
            <person name="Kikuno R."/>
            <person name="Ohara O."/>
            <person name="Nagase T."/>
        </authorList>
    </citation>
    <scope>SEQUENCE REVISION</scope>
</reference>
<reference key="4">
    <citation type="journal article" date="2004" name="Nat. Genet.">
        <title>Complete sequencing and characterization of 21,243 full-length human cDNAs.</title>
        <authorList>
            <person name="Ota T."/>
            <person name="Suzuki Y."/>
            <person name="Nishikawa T."/>
            <person name="Otsuki T."/>
            <person name="Sugiyama T."/>
            <person name="Irie R."/>
            <person name="Wakamatsu A."/>
            <person name="Hayashi K."/>
            <person name="Sato H."/>
            <person name="Nagai K."/>
            <person name="Kimura K."/>
            <person name="Makita H."/>
            <person name="Sekine M."/>
            <person name="Obayashi M."/>
            <person name="Nishi T."/>
            <person name="Shibahara T."/>
            <person name="Tanaka T."/>
            <person name="Ishii S."/>
            <person name="Yamamoto J."/>
            <person name="Saito K."/>
            <person name="Kawai Y."/>
            <person name="Isono Y."/>
            <person name="Nakamura Y."/>
            <person name="Nagahari K."/>
            <person name="Murakami K."/>
            <person name="Yasuda T."/>
            <person name="Iwayanagi T."/>
            <person name="Wagatsuma M."/>
            <person name="Shiratori A."/>
            <person name="Sudo H."/>
            <person name="Hosoiri T."/>
            <person name="Kaku Y."/>
            <person name="Kodaira H."/>
            <person name="Kondo H."/>
            <person name="Sugawara M."/>
            <person name="Takahashi M."/>
            <person name="Kanda K."/>
            <person name="Yokoi T."/>
            <person name="Furuya T."/>
            <person name="Kikkawa E."/>
            <person name="Omura Y."/>
            <person name="Abe K."/>
            <person name="Kamihara K."/>
            <person name="Katsuta N."/>
            <person name="Sato K."/>
            <person name="Tanikawa M."/>
            <person name="Yamazaki M."/>
            <person name="Ninomiya K."/>
            <person name="Ishibashi T."/>
            <person name="Yamashita H."/>
            <person name="Murakawa K."/>
            <person name="Fujimori K."/>
            <person name="Tanai H."/>
            <person name="Kimata M."/>
            <person name="Watanabe M."/>
            <person name="Hiraoka S."/>
            <person name="Chiba Y."/>
            <person name="Ishida S."/>
            <person name="Ono Y."/>
            <person name="Takiguchi S."/>
            <person name="Watanabe S."/>
            <person name="Yosida M."/>
            <person name="Hotuta T."/>
            <person name="Kusano J."/>
            <person name="Kanehori K."/>
            <person name="Takahashi-Fujii A."/>
            <person name="Hara H."/>
            <person name="Tanase T.-O."/>
            <person name="Nomura Y."/>
            <person name="Togiya S."/>
            <person name="Komai F."/>
            <person name="Hara R."/>
            <person name="Takeuchi K."/>
            <person name="Arita M."/>
            <person name="Imose N."/>
            <person name="Musashino K."/>
            <person name="Yuuki H."/>
            <person name="Oshima A."/>
            <person name="Sasaki N."/>
            <person name="Aotsuka S."/>
            <person name="Yoshikawa Y."/>
            <person name="Matsunawa H."/>
            <person name="Ichihara T."/>
            <person name="Shiohata N."/>
            <person name="Sano S."/>
            <person name="Moriya S."/>
            <person name="Momiyama H."/>
            <person name="Satoh N."/>
            <person name="Takami S."/>
            <person name="Terashima Y."/>
            <person name="Suzuki O."/>
            <person name="Nakagawa S."/>
            <person name="Senoh A."/>
            <person name="Mizoguchi H."/>
            <person name="Goto Y."/>
            <person name="Shimizu F."/>
            <person name="Wakebe H."/>
            <person name="Hishigaki H."/>
            <person name="Watanabe T."/>
            <person name="Sugiyama A."/>
            <person name="Takemoto M."/>
            <person name="Kawakami B."/>
            <person name="Yamazaki M."/>
            <person name="Watanabe K."/>
            <person name="Kumagai A."/>
            <person name="Itakura S."/>
            <person name="Fukuzumi Y."/>
            <person name="Fujimori Y."/>
            <person name="Komiyama M."/>
            <person name="Tashiro H."/>
            <person name="Tanigami A."/>
            <person name="Fujiwara T."/>
            <person name="Ono T."/>
            <person name="Yamada K."/>
            <person name="Fujii Y."/>
            <person name="Ozaki K."/>
            <person name="Hirao M."/>
            <person name="Ohmori Y."/>
            <person name="Kawabata A."/>
            <person name="Hikiji T."/>
            <person name="Kobatake N."/>
            <person name="Inagaki H."/>
            <person name="Ikema Y."/>
            <person name="Okamoto S."/>
            <person name="Okitani R."/>
            <person name="Kawakami T."/>
            <person name="Noguchi S."/>
            <person name="Itoh T."/>
            <person name="Shigeta K."/>
            <person name="Senba T."/>
            <person name="Matsumura K."/>
            <person name="Nakajima Y."/>
            <person name="Mizuno T."/>
            <person name="Morinaga M."/>
            <person name="Sasaki M."/>
            <person name="Togashi T."/>
            <person name="Oyama M."/>
            <person name="Hata H."/>
            <person name="Watanabe M."/>
            <person name="Komatsu T."/>
            <person name="Mizushima-Sugano J."/>
            <person name="Satoh T."/>
            <person name="Shirai Y."/>
            <person name="Takahashi Y."/>
            <person name="Nakagawa K."/>
            <person name="Okumura K."/>
            <person name="Nagase T."/>
            <person name="Nomura N."/>
            <person name="Kikuchi H."/>
            <person name="Masuho Y."/>
            <person name="Yamashita R."/>
            <person name="Nakai K."/>
            <person name="Yada T."/>
            <person name="Nakamura Y."/>
            <person name="Ohara O."/>
            <person name="Isogai T."/>
            <person name="Sugano S."/>
        </authorList>
    </citation>
    <scope>NUCLEOTIDE SEQUENCE [LARGE SCALE MRNA] (ISOFORMS 3; 4 AND 5)</scope>
    <source>
        <tissue>Brain</tissue>
        <tissue>Teratocarcinoma</tissue>
        <tissue>Testis</tissue>
    </source>
</reference>
<reference key="5">
    <citation type="journal article" date="2007" name="BMC Genomics">
        <title>The full-ORF clone resource of the German cDNA consortium.</title>
        <authorList>
            <person name="Bechtel S."/>
            <person name="Rosenfelder H."/>
            <person name="Duda A."/>
            <person name="Schmidt C.P."/>
            <person name="Ernst U."/>
            <person name="Wellenreuther R."/>
            <person name="Mehrle A."/>
            <person name="Schuster C."/>
            <person name="Bahr A."/>
            <person name="Bloecker H."/>
            <person name="Heubner D."/>
            <person name="Hoerlein A."/>
            <person name="Michel G."/>
            <person name="Wedler H."/>
            <person name="Koehrer K."/>
            <person name="Ottenwaelder B."/>
            <person name="Poustka A."/>
            <person name="Wiemann S."/>
            <person name="Schupp I."/>
        </authorList>
    </citation>
    <scope>NUCLEOTIDE SEQUENCE [LARGE SCALE MRNA] (ISOFORM 2)</scope>
    <scope>NUCLEOTIDE SEQUENCE [LARGE SCALE MRNA] OF 3-677 (ISOFORM 1)</scope>
    <source>
        <tissue>Melanoma</tissue>
        <tissue>Retina</tissue>
        <tissue>Stomach</tissue>
    </source>
</reference>
<reference key="6">
    <citation type="journal article" date="2004" name="Genome Res.">
        <title>The status, quality, and expansion of the NIH full-length cDNA project: the Mammalian Gene Collection (MGC).</title>
        <authorList>
            <consortium name="The MGC Project Team"/>
        </authorList>
    </citation>
    <scope>NUCLEOTIDE SEQUENCE [LARGE SCALE MRNA] (ISOFORM 1)</scope>
    <source>
        <tissue>Brain</tissue>
        <tissue>Eye</tissue>
    </source>
</reference>
<reference key="7">
    <citation type="journal article" date="2003" name="J. Virol.">
        <title>Distinct roles of cellular Lck and p80 proteins in herpesvirus saimiri Tip function on lipid rafts.</title>
        <authorList>
            <person name="Park J."/>
            <person name="Cho N.-H."/>
            <person name="Choi J.-K."/>
            <person name="Feng P."/>
            <person name="Choe J."/>
            <person name="Jung J.U."/>
        </authorList>
    </citation>
    <scope>INTERACTION WITH HERPESVIRUS SAIMIRI TIP (MICROBIAL INFECTION)</scope>
</reference>
<reference key="8">
    <citation type="journal article" date="2007" name="Mol. Cell">
        <title>A UAF1-containing multisubunit protein complex regulates the Fanconi anemia pathway.</title>
        <authorList>
            <person name="Cohn M.A."/>
            <person name="Kowal P."/>
            <person name="Yang K."/>
            <person name="Haas W."/>
            <person name="Huang T.T."/>
            <person name="Gygi S.P."/>
            <person name="D'Andrea A.D."/>
        </authorList>
    </citation>
    <scope>IDENTIFICATION BY MASS SPECTROMETRY</scope>
    <scope>FUNCTION</scope>
    <scope>SUBCELLULAR LOCATION</scope>
    <scope>INTERACTION WITH USP1</scope>
</reference>
<reference key="9">
    <citation type="journal article" date="2008" name="J. Virol.">
        <title>Human papillomavirus E1 helicase interacts with the WD repeat protein p80 to promote maintenance of the viral genome in keratinocytes.</title>
        <authorList>
            <person name="Cote-Martin A."/>
            <person name="Moody C."/>
            <person name="Fradet-Turcotte A."/>
            <person name="D'Abramo C.M."/>
            <person name="Lehoux M."/>
            <person name="Joubert S."/>
            <person name="Poirier G.G."/>
            <person name="Coulombe B."/>
            <person name="Laimins L.A."/>
            <person name="Archambault J."/>
        </authorList>
    </citation>
    <scope>FUNCTION (MICROBIAL INFECTION)</scope>
    <scope>SUBCELLULAR LOCATION</scope>
    <scope>INTERACTION WITH HPV11 E1 (MICROBIAL INFECTION)</scope>
</reference>
<reference key="10">
    <citation type="journal article" date="2009" name="J. Biol. Chem.">
        <title>UAF1 is a subunit of multiple deubiquitinating enzyme complexes.</title>
        <authorList>
            <person name="Cohn M.A."/>
            <person name="Kee Y."/>
            <person name="Haas W."/>
            <person name="Gygi S.P."/>
            <person name="D'Andrea A.D."/>
        </authorList>
    </citation>
    <scope>FUNCTION</scope>
    <scope>INTERACTION WITH USP12 AND USP46</scope>
</reference>
<reference key="11">
    <citation type="journal article" date="2009" name="Science">
        <title>Lysine acetylation targets protein complexes and co-regulates major cellular functions.</title>
        <authorList>
            <person name="Choudhary C."/>
            <person name="Kumar C."/>
            <person name="Gnad F."/>
            <person name="Nielsen M.L."/>
            <person name="Rehman M."/>
            <person name="Walther T.C."/>
            <person name="Olsen J.V."/>
            <person name="Mann M."/>
        </authorList>
    </citation>
    <scope>ACETYLATION [LARGE SCALE ANALYSIS] AT LYS-214</scope>
    <scope>IDENTIFICATION BY MASS SPECTROMETRY [LARGE SCALE ANALYSIS]</scope>
</reference>
<reference key="12">
    <citation type="journal article" date="2010" name="J. Biol. Chem.">
        <title>Human ELG1 regulates the level of ubiquitinated proliferating cell nuclear antigen (PCNA) through Its interactions with PCNA and USP1.</title>
        <authorList>
            <person name="Lee K.Y."/>
            <person name="Yang K."/>
            <person name="Cohn M.A."/>
            <person name="Sikdar N."/>
            <person name="D'Andrea A.D."/>
            <person name="Myung K."/>
        </authorList>
    </citation>
    <scope>FUNCTION</scope>
    <scope>INTERACTION WITH ATAD5</scope>
</reference>
<reference key="13">
    <citation type="journal article" date="2011" name="BMC Syst. Biol.">
        <title>Initial characterization of the human central proteome.</title>
        <authorList>
            <person name="Burkard T.R."/>
            <person name="Planyavsky M."/>
            <person name="Kaupe I."/>
            <person name="Breitwieser F.P."/>
            <person name="Buerckstuemmer T."/>
            <person name="Bennett K.L."/>
            <person name="Superti-Furga G."/>
            <person name="Colinge J."/>
        </authorList>
    </citation>
    <scope>IDENTIFICATION BY MASS SPECTROMETRY [LARGE SCALE ANALYSIS]</scope>
</reference>
<reference key="14">
    <citation type="journal article" date="2012" name="J. Biol. Chem.">
        <title>The ubiquitin-specific protease 12 (USP12) is a negative regulator of notch signaling acting on notch receptor trafficking toward degradation.</title>
        <authorList>
            <person name="Moretti J."/>
            <person name="Chastagner P."/>
            <person name="Liang C.C."/>
            <person name="Cohn M.A."/>
            <person name="Israel A."/>
            <person name="Brou C."/>
        </authorList>
    </citation>
    <scope>INTERACTION WITH ITCH AND USP12</scope>
</reference>
<reference key="15">
    <citation type="journal article" date="2013" name="J. Biol. Chem.">
        <title>WD repeat protein WDR48 in complex with deubiquitinase USP12 suppresses Akt-dependent cell survival signaling by stabilizing PH domain leucine-rich repeat protein phosphatase 1 (PHLPP1).</title>
        <authorList>
            <person name="Gangula N.R."/>
            <person name="Maddika S."/>
        </authorList>
    </citation>
    <scope>FUNCTION</scope>
    <scope>MUTAGENESIS OF LEU-580</scope>
    <scope>INTERACTION WITH PHLPP1</scope>
</reference>
<reference key="16">
    <citation type="journal article" date="2014" name="J. Proteomics">
        <title>An enzyme assisted RP-RPLC approach for in-depth analysis of human liver phosphoproteome.</title>
        <authorList>
            <person name="Bian Y."/>
            <person name="Song C."/>
            <person name="Cheng K."/>
            <person name="Dong M."/>
            <person name="Wang F."/>
            <person name="Huang J."/>
            <person name="Sun D."/>
            <person name="Wang L."/>
            <person name="Ye M."/>
            <person name="Zou H."/>
        </authorList>
    </citation>
    <scope>PHOSPHORYLATION [LARGE SCALE ANALYSIS] AT THR-613</scope>
    <scope>IDENTIFICATION BY MASS SPECTROMETRY [LARGE SCALE ANALYSIS]</scope>
    <source>
        <tissue>Liver</tissue>
    </source>
</reference>
<reference key="17">
    <citation type="journal article" date="2015" name="PLoS Pathog.">
        <title>The EBNA3 family of Epstein-Barr virus nuclear proteins associates with the USP46/USP12 deubiquitination complexes to regulate lymphoblastoid cell line growth.</title>
        <authorList>
            <person name="Ohashi M."/>
            <person name="Holthaus A.M."/>
            <person name="Calderwood M.A."/>
            <person name="Lai C.Y."/>
            <person name="Krastins B."/>
            <person name="Sarracino D."/>
            <person name="Johannsen E."/>
        </authorList>
    </citation>
    <scope>INTERACTION WITH EPSTEIN-BARR VIRUS PROTEINS EBNA3 (MICROBIAL INFECTION)</scope>
</reference>
<reference key="18">
    <citation type="journal article" date="2016" name="Cell Cycle">
        <title>The USP1-UAF1 complex interacts with RAD51AP1 to promote homologous recombination repair.</title>
        <authorList>
            <person name="Cukras S."/>
            <person name="Lee E."/>
            <person name="Palumbo E."/>
            <person name="Benavidez P."/>
            <person name="Moldovan G.L."/>
            <person name="Kee Y."/>
        </authorList>
    </citation>
    <scope>FUNCTION</scope>
    <scope>INTERACTION WITH RAD51AP1</scope>
</reference>
<reference key="19">
    <citation type="journal article" date="2016" name="Cell Rep.">
        <title>Promotion of RAD51-mediated homologous DNA pairing by the RAD51AP1-UAF1 complex.</title>
        <authorList>
            <person name="Liang F."/>
            <person name="Longerich S."/>
            <person name="Miller A.S."/>
            <person name="Tang C."/>
            <person name="Buzovetsky O."/>
            <person name="Xiong Y."/>
            <person name="Maranon D.G."/>
            <person name="Wiese C."/>
            <person name="Kupfer G.M."/>
            <person name="Sung P."/>
        </authorList>
    </citation>
    <scope>FUNCTION</scope>
    <scope>DNA-BINDING</scope>
    <scope>INTERACTION WITH RAD51AP1</scope>
    <scope>MUTAGENESIS OF LYS-459; 595-LYS--HIS-599; LYS-595 AND HIS-599</scope>
</reference>
<reference key="20">
    <citation type="journal article" date="2019" name="Nat. Commun.">
        <title>ATAD5 promotes replication restart by regulating RAD51 and PCNA in response to replication stress.</title>
        <authorList>
            <person name="Park S.H."/>
            <person name="Kang N."/>
            <person name="Song E."/>
            <person name="Wie M."/>
            <person name="Lee E.A."/>
            <person name="Hwang S."/>
            <person name="Lee D."/>
            <person name="Ra J.S."/>
            <person name="Park I.B."/>
            <person name="Park J."/>
            <person name="Kang S."/>
            <person name="Park J.H."/>
            <person name="Hohng S."/>
            <person name="Lee K.Y."/>
            <person name="Myung K."/>
        </authorList>
    </citation>
    <scope>FUNCTION</scope>
    <scope>INTERACTION WITH RAD51 AND ATAD5</scope>
</reference>
<reference key="21">
    <citation type="journal article" date="2019" name="Nat. Commun.">
        <title>DNA requirement in FANCD2 deubiquitination by USP1-UAF1-RAD51AP1 in the Fanconi anemia DNA damage response.</title>
        <authorList>
            <person name="Liang F."/>
            <person name="Miller A.S."/>
            <person name="Longerich S."/>
            <person name="Tang C."/>
            <person name="Maranon D."/>
            <person name="Williamson E.A."/>
            <person name="Hromas R."/>
            <person name="Wiese C."/>
            <person name="Kupfer G.M."/>
            <person name="Sung P."/>
        </authorList>
    </citation>
    <scope>FUNCTION</scope>
    <scope>DNA-BINDING</scope>
    <scope>MUTAGENESIS OF ARG-30; ARG-50; LYS-117; THR-161; LYS-168; SER-230; ARG-272; ARG-274; LYS-275; LYS-318 AND ILE-363</scope>
</reference>
<reference key="22">
    <citation type="journal article" date="2020" name="J. Biol. Chem.">
        <title>The DNA-binding activity of USP1-associated factor 1 is required for efficient RAD51-mediated homologous DNA pairing and homology-directed DNA repair.</title>
        <authorList>
            <person name="Liang F."/>
            <person name="Miller A.S."/>
            <person name="Tang C."/>
            <person name="Maranon D."/>
            <person name="Williamson E.A."/>
            <person name="Hromas R."/>
            <person name="Wiese C."/>
            <person name="Zhao W."/>
            <person name="Sung P."/>
            <person name="Kupfer G.M."/>
        </authorList>
    </citation>
    <scope>FUNCTION</scope>
    <scope>DNA-BINDING</scope>
    <scope>MUTAGENESIS OF ARG-30; ARG-50; LYS-117; THR-161; LYS-168; SER-230; ARG-272; ARG-274; LYS-275; LYS-318 AND ILE-363</scope>
</reference>
<reference key="23">
    <citation type="journal article" date="2021" name="FEBS J.">
        <title>The dystrophia myotonica WD repeat-containing protein DMWD and WDR20 differentially regulate USP12 deubiquitinase.</title>
        <authorList>
            <person name="Olazabal-Herrero A."/>
            <person name="Bilbao-Arribas M."/>
            <person name="Carlevaris O."/>
            <person name="Sendino M."/>
            <person name="Varela-Martinez E."/>
            <person name="Jugo B.M."/>
            <person name="Berra E."/>
            <person name="Rodriguez J.A."/>
        </authorList>
    </citation>
    <scope>SUBUNIT</scope>
</reference>
<reference key="24">
    <citation type="journal article" date="2023" name="PLoS Pathog.">
        <title>Human Cytomegalovirus UL138 interaction with USP1 activates STAT1 in infection.</title>
        <authorList>
            <person name="Zarrella K."/>
            <person name="Longmire P."/>
            <person name="Zeltzer S."/>
            <person name="Collins-McMillen D."/>
            <person name="Hancock M."/>
            <person name="Buehler J."/>
            <person name="Reitsma J.M."/>
            <person name="Terhune S.S."/>
            <person name="Nelson J.A."/>
            <person name="Goodrum F."/>
        </authorList>
    </citation>
    <scope>INTERACTION WITH HUMAN CYTOMEGALOVIRUS PROTEIN UL138 (MICROBIAL INFECTION)</scope>
</reference>
<reference evidence="32 33 34" key="25">
    <citation type="journal article" date="2015" name="Structure">
        <title>Structural insights into WD-repeat 48 activation of ubiquitin-specific protease 46.</title>
        <authorList>
            <person name="Yin J."/>
            <person name="Schoeffler A.J."/>
            <person name="Wickliffe K."/>
            <person name="Newton K."/>
            <person name="Starovasnik M.A."/>
            <person name="Dueber E.C."/>
            <person name="Harris S.F."/>
        </authorList>
    </citation>
    <scope>X-RAY CRYSTALLOGRAPHY (3.00 ANGSTROMS) OF 2-580 IN COMPLEX WITH USP46 AND UBIQUITIN</scope>
    <scope>INTERACTION WITH USP46 AND USP1</scope>
    <scope>FUNCTION</scope>
    <scope>MUTAGENESIS OF SER-170; LYS-214; TRP-256 AND ARG-272</scope>
</reference>
<reference evidence="38 39" key="26">
    <citation type="journal article" date="2016" name="J. Struct. Biol.">
        <title>A conserved two-step binding for the UAF1 regulator to the USP12 deubiquitinating enzyme.</title>
        <authorList>
            <person name="Dharadhar S."/>
            <person name="Clerici M."/>
            <person name="van Dijk W.J."/>
            <person name="Fish A."/>
            <person name="Sixma T.K."/>
        </authorList>
    </citation>
    <scope>X-RAY CRYSTALLOGRAPHY (2.30 ANGSTROMS) OF 9-580</scope>
    <scope>X-RAY CRYSTALLOGRAPHY (2.79 ANGSTROMS) OF 9-580 IN COMPLEX WITH USP12 AND UBIQUITIN</scope>
    <scope>INTERACTION WITH USP12</scope>
    <scope>FUNCTION</scope>
    <scope>MUTAGENESIS OF LYS-214; TRP-256 AND ARG-272</scope>
</reference>
<reference evidence="35 36 37" key="27">
    <citation type="journal article" date="2016" name="Mol. Cell">
        <title>Allosteric activation of ubiquitin-specific proteases by beta-propeller proteins UAF1 and WDR20.</title>
        <authorList>
            <person name="Li H."/>
            <person name="Lim K.S."/>
            <person name="Kim H."/>
            <person name="Hinds T.R."/>
            <person name="Jo U."/>
            <person name="Mao H."/>
            <person name="Weller C.E."/>
            <person name="Sun J."/>
            <person name="Chatterjee C."/>
            <person name="D'Andrea A.D."/>
            <person name="Zheng N."/>
        </authorList>
    </citation>
    <scope>X-RAY CRYSTALLOGRAPHY (2.30 ANGSTROMS) IN COMPLEX WITH USP12 AND WDR20</scope>
    <scope>INTERACTION WITH USP12</scope>
    <scope>FUNCTION</scope>
    <scope>MUTAGENESIS OF TRP-77; TYR-119; TYR-172 AND TRP-256</scope>
</reference>
<reference key="28">
    <citation type="journal article" date="2014" name="Science">
        <title>Exome sequencing links corticospinal motor neuron disease to common neurodegenerative disorders.</title>
        <authorList>
            <person name="Novarino G."/>
            <person name="Fenstermaker A.G."/>
            <person name="Zaki M.S."/>
            <person name="Hofree M."/>
            <person name="Silhavy J.L."/>
            <person name="Heiberg A.D."/>
            <person name="Abdellateef M."/>
            <person name="Rosti B."/>
            <person name="Scott E."/>
            <person name="Mansour L."/>
            <person name="Masri A."/>
            <person name="Kayserili H."/>
            <person name="Al-Aama J.Y."/>
            <person name="Abdel-Salam G.M."/>
            <person name="Karminejad A."/>
            <person name="Kara M."/>
            <person name="Kara B."/>
            <person name="Bozorgmehri B."/>
            <person name="Ben-Omran T."/>
            <person name="Mojahedi F."/>
            <person name="Mahmoud I.G."/>
            <person name="Bouslam N."/>
            <person name="Bouhouche A."/>
            <person name="Benomar A."/>
            <person name="Hanein S."/>
            <person name="Raymond L."/>
            <person name="Forlani S."/>
            <person name="Mascaro M."/>
            <person name="Selim L."/>
            <person name="Shehata N."/>
            <person name="Al-Allawi N."/>
            <person name="Bindu P.S."/>
            <person name="Azam M."/>
            <person name="Gunel M."/>
            <person name="Caglayan A."/>
            <person name="Bilguvar K."/>
            <person name="Tolun A."/>
            <person name="Issa M.Y."/>
            <person name="Schroth J."/>
            <person name="Spencer E.G."/>
            <person name="Rosti R.O."/>
            <person name="Akizu N."/>
            <person name="Vaux K.K."/>
            <person name="Johansen A."/>
            <person name="Koh A.A."/>
            <person name="Megahed H."/>
            <person name="Durr A."/>
            <person name="Brice A."/>
            <person name="Stevanin G."/>
            <person name="Gabriel S.B."/>
            <person name="Ideker T."/>
            <person name="Gleeson J.G."/>
        </authorList>
    </citation>
    <scope>VARIANT GLU-628 DEL</scope>
</reference>
<name>WDR48_HUMAN</name>